<protein>
    <recommendedName>
        <fullName evidence="1">3-methyl-2-oxobutanoate hydroxymethyltransferase</fullName>
        <ecNumber evidence="1">2.1.2.11</ecNumber>
    </recommendedName>
    <alternativeName>
        <fullName evidence="1">Ketopantoate hydroxymethyltransferase</fullName>
        <shortName evidence="1">KPHMT</shortName>
    </alternativeName>
</protein>
<comment type="function">
    <text evidence="1">Catalyzes the reversible reaction in which hydroxymethyl group from 5,10-methylenetetrahydrofolate is transferred onto alpha-ketoisovalerate to form ketopantoate.</text>
</comment>
<comment type="catalytic activity">
    <reaction evidence="1">
        <text>3-methyl-2-oxobutanoate + (6R)-5,10-methylene-5,6,7,8-tetrahydrofolate + H2O = 2-dehydropantoate + (6S)-5,6,7,8-tetrahydrofolate</text>
        <dbReference type="Rhea" id="RHEA:11824"/>
        <dbReference type="ChEBI" id="CHEBI:11561"/>
        <dbReference type="ChEBI" id="CHEBI:11851"/>
        <dbReference type="ChEBI" id="CHEBI:15377"/>
        <dbReference type="ChEBI" id="CHEBI:15636"/>
        <dbReference type="ChEBI" id="CHEBI:57453"/>
        <dbReference type="EC" id="2.1.2.11"/>
    </reaction>
</comment>
<comment type="cofactor">
    <cofactor evidence="1">
        <name>Mg(2+)</name>
        <dbReference type="ChEBI" id="CHEBI:18420"/>
    </cofactor>
    <text evidence="1">Binds 1 Mg(2+) ion per subunit.</text>
</comment>
<comment type="pathway">
    <text evidence="1">Cofactor biosynthesis; (R)-pantothenate biosynthesis; (R)-pantoate from 3-methyl-2-oxobutanoate: step 1/2.</text>
</comment>
<comment type="subunit">
    <text evidence="1">Homodecamer; pentamer of dimers.</text>
</comment>
<comment type="subcellular location">
    <subcellularLocation>
        <location evidence="1">Cytoplasm</location>
    </subcellularLocation>
</comment>
<comment type="similarity">
    <text evidence="1">Belongs to the PanB family.</text>
</comment>
<proteinExistence type="inferred from homology"/>
<sequence length="263" mass="27668">MITVNTLQKMKAAGEKIAMLTAYESSFAALMDDAGVDVLLVGDSLGMAVQGRQSTLPVSLRDMCYHTECVARGAKNAMIVSDLPFGAYQQSKEQAFAAAAELMAAGAHMVKLEGGVWMAETTEFLQMRGIPVCAHIGLTPQSVFAFGGYKVQGRGGKAQALLNDAKAHDDAGAAVVLMECVPAELAKKVTESVSCPTIGIGAGVDCDGQVLVMHDMLGIFPGKTAKFVKNFMQGQSSIQAAVRAYVAEVKAKTFPAAEHIFAD</sequence>
<evidence type="ECO:0000255" key="1">
    <source>
        <dbReference type="HAMAP-Rule" id="MF_00156"/>
    </source>
</evidence>
<keyword id="KW-0963">Cytoplasm</keyword>
<keyword id="KW-0460">Magnesium</keyword>
<keyword id="KW-0479">Metal-binding</keyword>
<keyword id="KW-0566">Pantothenate biosynthesis</keyword>
<keyword id="KW-0808">Transferase</keyword>
<reference key="1">
    <citation type="journal article" date="2000" name="Nature">
        <title>Complete DNA sequence of a serogroup A strain of Neisseria meningitidis Z2491.</title>
        <authorList>
            <person name="Parkhill J."/>
            <person name="Achtman M."/>
            <person name="James K.D."/>
            <person name="Bentley S.D."/>
            <person name="Churcher C.M."/>
            <person name="Klee S.R."/>
            <person name="Morelli G."/>
            <person name="Basham D."/>
            <person name="Brown D."/>
            <person name="Chillingworth T."/>
            <person name="Davies R.M."/>
            <person name="Davis P."/>
            <person name="Devlin K."/>
            <person name="Feltwell T."/>
            <person name="Hamlin N."/>
            <person name="Holroyd S."/>
            <person name="Jagels K."/>
            <person name="Leather S."/>
            <person name="Moule S."/>
            <person name="Mungall K.L."/>
            <person name="Quail M.A."/>
            <person name="Rajandream M.A."/>
            <person name="Rutherford K.M."/>
            <person name="Simmonds M."/>
            <person name="Skelton J."/>
            <person name="Whitehead S."/>
            <person name="Spratt B.G."/>
            <person name="Barrell B.G."/>
        </authorList>
    </citation>
    <scope>NUCLEOTIDE SEQUENCE [LARGE SCALE GENOMIC DNA]</scope>
    <source>
        <strain>DSM 15465 / Z2491</strain>
    </source>
</reference>
<accession>Q9JUY0</accession>
<accession>A1IRB3</accession>
<gene>
    <name evidence="1" type="primary">panB</name>
    <name type="ordered locus">NMA1088</name>
</gene>
<dbReference type="EC" id="2.1.2.11" evidence="1"/>
<dbReference type="EMBL" id="AL157959">
    <property type="protein sequence ID" value="CAM08299.1"/>
    <property type="molecule type" value="Genomic_DNA"/>
</dbReference>
<dbReference type="PIR" id="E81874">
    <property type="entry name" value="E81874"/>
</dbReference>
<dbReference type="RefSeq" id="WP_002246866.1">
    <property type="nucleotide sequence ID" value="NC_003116.1"/>
</dbReference>
<dbReference type="SMR" id="Q9JUY0"/>
<dbReference type="EnsemblBacteria" id="CAM08299">
    <property type="protein sequence ID" value="CAM08299"/>
    <property type="gene ID" value="NMA1088"/>
</dbReference>
<dbReference type="KEGG" id="nma:NMA1088"/>
<dbReference type="HOGENOM" id="CLU_036645_1_0_4"/>
<dbReference type="UniPathway" id="UPA00028">
    <property type="reaction ID" value="UER00003"/>
</dbReference>
<dbReference type="Proteomes" id="UP000000626">
    <property type="component" value="Chromosome"/>
</dbReference>
<dbReference type="GO" id="GO:0005737">
    <property type="term" value="C:cytoplasm"/>
    <property type="evidence" value="ECO:0007669"/>
    <property type="project" value="UniProtKB-SubCell"/>
</dbReference>
<dbReference type="GO" id="GO:0003864">
    <property type="term" value="F:3-methyl-2-oxobutanoate hydroxymethyltransferase activity"/>
    <property type="evidence" value="ECO:0007669"/>
    <property type="project" value="UniProtKB-UniRule"/>
</dbReference>
<dbReference type="GO" id="GO:0000287">
    <property type="term" value="F:magnesium ion binding"/>
    <property type="evidence" value="ECO:0007669"/>
    <property type="project" value="TreeGrafter"/>
</dbReference>
<dbReference type="GO" id="GO:0015940">
    <property type="term" value="P:pantothenate biosynthetic process"/>
    <property type="evidence" value="ECO:0007669"/>
    <property type="project" value="UniProtKB-UniRule"/>
</dbReference>
<dbReference type="CDD" id="cd06557">
    <property type="entry name" value="KPHMT-like"/>
    <property type="match status" value="1"/>
</dbReference>
<dbReference type="FunFam" id="3.20.20.60:FF:000037">
    <property type="entry name" value="3-methyl-2-oxobutanoate hydroxymethyltransferase"/>
    <property type="match status" value="1"/>
</dbReference>
<dbReference type="Gene3D" id="3.20.20.60">
    <property type="entry name" value="Phosphoenolpyruvate-binding domains"/>
    <property type="match status" value="1"/>
</dbReference>
<dbReference type="HAMAP" id="MF_00156">
    <property type="entry name" value="PanB"/>
    <property type="match status" value="1"/>
</dbReference>
<dbReference type="InterPro" id="IPR003700">
    <property type="entry name" value="Pantoate_hydroxy_MeTrfase"/>
</dbReference>
<dbReference type="InterPro" id="IPR015813">
    <property type="entry name" value="Pyrv/PenolPyrv_kinase-like_dom"/>
</dbReference>
<dbReference type="InterPro" id="IPR040442">
    <property type="entry name" value="Pyrv_kinase-like_dom_sf"/>
</dbReference>
<dbReference type="NCBIfam" id="TIGR00222">
    <property type="entry name" value="panB"/>
    <property type="match status" value="1"/>
</dbReference>
<dbReference type="NCBIfam" id="NF001452">
    <property type="entry name" value="PRK00311.1"/>
    <property type="match status" value="1"/>
</dbReference>
<dbReference type="PANTHER" id="PTHR20881">
    <property type="entry name" value="3-METHYL-2-OXOBUTANOATE HYDROXYMETHYLTRANSFERASE"/>
    <property type="match status" value="1"/>
</dbReference>
<dbReference type="PANTHER" id="PTHR20881:SF0">
    <property type="entry name" value="3-METHYL-2-OXOBUTANOATE HYDROXYMETHYLTRANSFERASE"/>
    <property type="match status" value="1"/>
</dbReference>
<dbReference type="Pfam" id="PF02548">
    <property type="entry name" value="Pantoate_transf"/>
    <property type="match status" value="1"/>
</dbReference>
<dbReference type="PIRSF" id="PIRSF000388">
    <property type="entry name" value="Pantoate_hydroxy_MeTrfase"/>
    <property type="match status" value="1"/>
</dbReference>
<dbReference type="SUPFAM" id="SSF51621">
    <property type="entry name" value="Phosphoenolpyruvate/pyruvate domain"/>
    <property type="match status" value="1"/>
</dbReference>
<organism>
    <name type="scientific">Neisseria meningitidis serogroup A / serotype 4A (strain DSM 15465 / Z2491)</name>
    <dbReference type="NCBI Taxonomy" id="122587"/>
    <lineage>
        <taxon>Bacteria</taxon>
        <taxon>Pseudomonadati</taxon>
        <taxon>Pseudomonadota</taxon>
        <taxon>Betaproteobacteria</taxon>
        <taxon>Neisseriales</taxon>
        <taxon>Neisseriaceae</taxon>
        <taxon>Neisseria</taxon>
    </lineage>
</organism>
<name>PANB_NEIMA</name>
<feature type="chain" id="PRO_0000184866" description="3-methyl-2-oxobutanoate hydroxymethyltransferase">
    <location>
        <begin position="1"/>
        <end position="263"/>
    </location>
</feature>
<feature type="active site" description="Proton acceptor" evidence="1">
    <location>
        <position position="179"/>
    </location>
</feature>
<feature type="binding site" evidence="1">
    <location>
        <begin position="43"/>
        <end position="44"/>
    </location>
    <ligand>
        <name>3-methyl-2-oxobutanoate</name>
        <dbReference type="ChEBI" id="CHEBI:11851"/>
    </ligand>
</feature>
<feature type="binding site" evidence="1">
    <location>
        <position position="43"/>
    </location>
    <ligand>
        <name>Mg(2+)</name>
        <dbReference type="ChEBI" id="CHEBI:18420"/>
    </ligand>
</feature>
<feature type="binding site" evidence="1">
    <location>
        <position position="82"/>
    </location>
    <ligand>
        <name>3-methyl-2-oxobutanoate</name>
        <dbReference type="ChEBI" id="CHEBI:11851"/>
    </ligand>
</feature>
<feature type="binding site" evidence="1">
    <location>
        <position position="82"/>
    </location>
    <ligand>
        <name>Mg(2+)</name>
        <dbReference type="ChEBI" id="CHEBI:18420"/>
    </ligand>
</feature>
<feature type="binding site" evidence="1">
    <location>
        <position position="111"/>
    </location>
    <ligand>
        <name>3-methyl-2-oxobutanoate</name>
        <dbReference type="ChEBI" id="CHEBI:11851"/>
    </ligand>
</feature>
<feature type="binding site" evidence="1">
    <location>
        <position position="113"/>
    </location>
    <ligand>
        <name>Mg(2+)</name>
        <dbReference type="ChEBI" id="CHEBI:18420"/>
    </ligand>
</feature>